<gene>
    <name type="primary">acmsd</name>
    <name type="ORF">DDB_G0286525</name>
</gene>
<sequence length="359" mass="40451">MENKETTTTTTTTNNGSDKKKRSLKIDLHTHILPKNWPNLKEKYGYGGWVSLDHHCSCKAKMMIDGKFFREIDSNCWDPDVRIQELNRDDVDIQVLSTVPVMFGYWAKPQDALDLAQYLNDHIAQVVSENPKRFIGLGSLPMQCTESSIQELRRCILELGLPGIQIGSNVNGKNLDDPSLFPIFEECEKLGAAVFIHPWEMVGKDRMPQYWLPWLVGMPAETCLAICSMIFGGVFQRLPNLKVCFAHGGGSFPFTIGRIEHGFNARPDLCAVVNPINPREYIGKFWVDSLVHDEEALKFLVNLMGEKKVTLGTDYPFPLGELVPGQLIESIKEFSETTKENLLGGNALEFLGLDPNKYL</sequence>
<name>ACMSD_DICDI</name>
<protein>
    <recommendedName>
        <fullName>2-amino-3-carboxymuconate-6-semialdehyde decarboxylase</fullName>
        <ecNumber>4.1.1.45</ecNumber>
    </recommendedName>
    <alternativeName>
        <fullName>Picolinate carboxylase</fullName>
    </alternativeName>
</protein>
<proteinExistence type="inferred from homology"/>
<organism>
    <name type="scientific">Dictyostelium discoideum</name>
    <name type="common">Social amoeba</name>
    <dbReference type="NCBI Taxonomy" id="44689"/>
    <lineage>
        <taxon>Eukaryota</taxon>
        <taxon>Amoebozoa</taxon>
        <taxon>Evosea</taxon>
        <taxon>Eumycetozoa</taxon>
        <taxon>Dictyostelia</taxon>
        <taxon>Dictyosteliales</taxon>
        <taxon>Dictyosteliaceae</taxon>
        <taxon>Dictyostelium</taxon>
    </lineage>
</organism>
<feature type="chain" id="PRO_0000327893" description="2-amino-3-carboxymuconate-6-semialdehyde decarboxylase">
    <location>
        <begin position="1"/>
        <end position="359"/>
    </location>
</feature>
<feature type="region of interest" description="Disordered" evidence="2">
    <location>
        <begin position="1"/>
        <end position="21"/>
    </location>
</feature>
<feature type="compositionally biased region" description="Low complexity" evidence="2">
    <location>
        <begin position="1"/>
        <end position="13"/>
    </location>
</feature>
<feature type="binding site" evidence="1">
    <location>
        <position position="29"/>
    </location>
    <ligand>
        <name>Zn(2+)</name>
        <dbReference type="ChEBI" id="CHEBI:29105"/>
    </ligand>
</feature>
<feature type="binding site" evidence="1">
    <location>
        <position position="31"/>
    </location>
    <ligand>
        <name>Zn(2+)</name>
        <dbReference type="ChEBI" id="CHEBI:29105"/>
    </ligand>
</feature>
<feature type="binding site" evidence="1">
    <location>
        <position position="70"/>
    </location>
    <ligand>
        <name>substrate</name>
    </ligand>
</feature>
<feature type="binding site" evidence="1">
    <location>
        <position position="197"/>
    </location>
    <ligand>
        <name>Zn(2+)</name>
        <dbReference type="ChEBI" id="CHEBI:29105"/>
    </ligand>
</feature>
<feature type="binding site" evidence="1">
    <location>
        <position position="314"/>
    </location>
    <ligand>
        <name>Zn(2+)</name>
        <dbReference type="ChEBI" id="CHEBI:29105"/>
    </ligand>
</feature>
<keyword id="KW-0210">Decarboxylase</keyword>
<keyword id="KW-0456">Lyase</keyword>
<keyword id="KW-0479">Metal-binding</keyword>
<keyword id="KW-1185">Reference proteome</keyword>
<keyword id="KW-0862">Zinc</keyword>
<reference key="1">
    <citation type="journal article" date="2005" name="Nature">
        <title>The genome of the social amoeba Dictyostelium discoideum.</title>
        <authorList>
            <person name="Eichinger L."/>
            <person name="Pachebat J.A."/>
            <person name="Gloeckner G."/>
            <person name="Rajandream M.A."/>
            <person name="Sucgang R."/>
            <person name="Berriman M."/>
            <person name="Song J."/>
            <person name="Olsen R."/>
            <person name="Szafranski K."/>
            <person name="Xu Q."/>
            <person name="Tunggal B."/>
            <person name="Kummerfeld S."/>
            <person name="Madera M."/>
            <person name="Konfortov B.A."/>
            <person name="Rivero F."/>
            <person name="Bankier A.T."/>
            <person name="Lehmann R."/>
            <person name="Hamlin N."/>
            <person name="Davies R."/>
            <person name="Gaudet P."/>
            <person name="Fey P."/>
            <person name="Pilcher K."/>
            <person name="Chen G."/>
            <person name="Saunders D."/>
            <person name="Sodergren E.J."/>
            <person name="Davis P."/>
            <person name="Kerhornou A."/>
            <person name="Nie X."/>
            <person name="Hall N."/>
            <person name="Anjard C."/>
            <person name="Hemphill L."/>
            <person name="Bason N."/>
            <person name="Farbrother P."/>
            <person name="Desany B."/>
            <person name="Just E."/>
            <person name="Morio T."/>
            <person name="Rost R."/>
            <person name="Churcher C.M."/>
            <person name="Cooper J."/>
            <person name="Haydock S."/>
            <person name="van Driessche N."/>
            <person name="Cronin A."/>
            <person name="Goodhead I."/>
            <person name="Muzny D.M."/>
            <person name="Mourier T."/>
            <person name="Pain A."/>
            <person name="Lu M."/>
            <person name="Harper D."/>
            <person name="Lindsay R."/>
            <person name="Hauser H."/>
            <person name="James K.D."/>
            <person name="Quiles M."/>
            <person name="Madan Babu M."/>
            <person name="Saito T."/>
            <person name="Buchrieser C."/>
            <person name="Wardroper A."/>
            <person name="Felder M."/>
            <person name="Thangavelu M."/>
            <person name="Johnson D."/>
            <person name="Knights A."/>
            <person name="Loulseged H."/>
            <person name="Mungall K.L."/>
            <person name="Oliver K."/>
            <person name="Price C."/>
            <person name="Quail M.A."/>
            <person name="Urushihara H."/>
            <person name="Hernandez J."/>
            <person name="Rabbinowitsch E."/>
            <person name="Steffen D."/>
            <person name="Sanders M."/>
            <person name="Ma J."/>
            <person name="Kohara Y."/>
            <person name="Sharp S."/>
            <person name="Simmonds M.N."/>
            <person name="Spiegler S."/>
            <person name="Tivey A."/>
            <person name="Sugano S."/>
            <person name="White B."/>
            <person name="Walker D."/>
            <person name="Woodward J.R."/>
            <person name="Winckler T."/>
            <person name="Tanaka Y."/>
            <person name="Shaulsky G."/>
            <person name="Schleicher M."/>
            <person name="Weinstock G.M."/>
            <person name="Rosenthal A."/>
            <person name="Cox E.C."/>
            <person name="Chisholm R.L."/>
            <person name="Gibbs R.A."/>
            <person name="Loomis W.F."/>
            <person name="Platzer M."/>
            <person name="Kay R.R."/>
            <person name="Williams J.G."/>
            <person name="Dear P.H."/>
            <person name="Noegel A.A."/>
            <person name="Barrell B.G."/>
            <person name="Kuspa A."/>
        </authorList>
    </citation>
    <scope>NUCLEOTIDE SEQUENCE [LARGE SCALE GENOMIC DNA]</scope>
    <source>
        <strain>AX4</strain>
    </source>
</reference>
<dbReference type="EC" id="4.1.1.45"/>
<dbReference type="EMBL" id="AAFI02000087">
    <property type="protein sequence ID" value="EAL64189.1"/>
    <property type="molecule type" value="Genomic_DNA"/>
</dbReference>
<dbReference type="RefSeq" id="XP_637693.1">
    <property type="nucleotide sequence ID" value="XM_632601.1"/>
</dbReference>
<dbReference type="SMR" id="Q54LN9"/>
<dbReference type="FunCoup" id="Q54LN9">
    <property type="interactions" value="3"/>
</dbReference>
<dbReference type="STRING" id="44689.Q54LN9"/>
<dbReference type="PaxDb" id="44689-DDB0266468"/>
<dbReference type="EnsemblProtists" id="EAL64189">
    <property type="protein sequence ID" value="EAL64189"/>
    <property type="gene ID" value="DDB_G0286525"/>
</dbReference>
<dbReference type="GeneID" id="8625659"/>
<dbReference type="KEGG" id="ddi:DDB_G0286525"/>
<dbReference type="dictyBase" id="DDB_G0286525">
    <property type="gene designation" value="acmsd"/>
</dbReference>
<dbReference type="VEuPathDB" id="AmoebaDB:DDB_G0286525"/>
<dbReference type="eggNOG" id="KOG4245">
    <property type="taxonomic scope" value="Eukaryota"/>
</dbReference>
<dbReference type="HOGENOM" id="CLU_039329_1_2_1"/>
<dbReference type="InParanoid" id="Q54LN9"/>
<dbReference type="OMA" id="RIESCIM"/>
<dbReference type="PhylomeDB" id="Q54LN9"/>
<dbReference type="UniPathway" id="UPA00270"/>
<dbReference type="PRO" id="PR:Q54LN9"/>
<dbReference type="Proteomes" id="UP000002195">
    <property type="component" value="Chromosome 4"/>
</dbReference>
<dbReference type="GO" id="GO:0005737">
    <property type="term" value="C:cytoplasm"/>
    <property type="evidence" value="ECO:0000318"/>
    <property type="project" value="GO_Central"/>
</dbReference>
<dbReference type="GO" id="GO:0005829">
    <property type="term" value="C:cytosol"/>
    <property type="evidence" value="ECO:0000250"/>
    <property type="project" value="UniProtKB"/>
</dbReference>
<dbReference type="GO" id="GO:0001760">
    <property type="term" value="F:aminocarboxymuconate-semialdehyde decarboxylase activity"/>
    <property type="evidence" value="ECO:0000250"/>
    <property type="project" value="UniProtKB"/>
</dbReference>
<dbReference type="GO" id="GO:0016787">
    <property type="term" value="F:hydrolase activity"/>
    <property type="evidence" value="ECO:0007669"/>
    <property type="project" value="InterPro"/>
</dbReference>
<dbReference type="GO" id="GO:0046872">
    <property type="term" value="F:metal ion binding"/>
    <property type="evidence" value="ECO:0007669"/>
    <property type="project" value="UniProtKB-KW"/>
</dbReference>
<dbReference type="GO" id="GO:1904985">
    <property type="term" value="P:negative regulation of quinolinate biosynthetic process"/>
    <property type="evidence" value="ECO:0000250"/>
    <property type="project" value="UniProtKB"/>
</dbReference>
<dbReference type="GO" id="GO:0019748">
    <property type="term" value="P:secondary metabolic process"/>
    <property type="evidence" value="ECO:0000318"/>
    <property type="project" value="GO_Central"/>
</dbReference>
<dbReference type="FunFam" id="3.20.20.140:FF:000029">
    <property type="entry name" value="2-amino-3-carboxymuconate-6-semialdehyde decarboxylase"/>
    <property type="match status" value="1"/>
</dbReference>
<dbReference type="Gene3D" id="3.20.20.140">
    <property type="entry name" value="Metal-dependent hydrolases"/>
    <property type="match status" value="1"/>
</dbReference>
<dbReference type="InterPro" id="IPR032465">
    <property type="entry name" value="ACMSD"/>
</dbReference>
<dbReference type="InterPro" id="IPR006680">
    <property type="entry name" value="Amidohydro-rel"/>
</dbReference>
<dbReference type="InterPro" id="IPR032466">
    <property type="entry name" value="Metal_Hydrolase"/>
</dbReference>
<dbReference type="PANTHER" id="PTHR21240">
    <property type="entry name" value="2-AMINO-3-CARBOXYLMUCONATE-6-SEMIALDEHYDE DECARBOXYLASE"/>
    <property type="match status" value="1"/>
</dbReference>
<dbReference type="PANTHER" id="PTHR21240:SF27">
    <property type="entry name" value="2-AMINO-3-CARBOXYMUCONATE-6-SEMIALDEHYDE DECARBOXYLASE"/>
    <property type="match status" value="1"/>
</dbReference>
<dbReference type="Pfam" id="PF04909">
    <property type="entry name" value="Amidohydro_2"/>
    <property type="match status" value="1"/>
</dbReference>
<dbReference type="SUPFAM" id="SSF51556">
    <property type="entry name" value="Metallo-dependent hydrolases"/>
    <property type="match status" value="1"/>
</dbReference>
<evidence type="ECO:0000250" key="1"/>
<evidence type="ECO:0000256" key="2">
    <source>
        <dbReference type="SAM" id="MobiDB-lite"/>
    </source>
</evidence>
<evidence type="ECO:0000305" key="3"/>
<comment type="function">
    <text evidence="1">Converts alpha-amino-beta-carboxymuconate-epsilon-semialdehyde (ACMS) to alpha-aminomuconate semialdehyde (AMS).</text>
</comment>
<comment type="catalytic activity">
    <reaction>
        <text>2-amino-3-carboxymuconate 6-semialdehyde + H(+) = 2-aminomuconate 6-semialdehyde + CO2</text>
        <dbReference type="Rhea" id="RHEA:16557"/>
        <dbReference type="ChEBI" id="CHEBI:15378"/>
        <dbReference type="ChEBI" id="CHEBI:16526"/>
        <dbReference type="ChEBI" id="CHEBI:77634"/>
        <dbReference type="ChEBI" id="CHEBI:77803"/>
        <dbReference type="EC" id="4.1.1.45"/>
    </reaction>
</comment>
<comment type="pathway">
    <text>Secondary metabolite metabolism; quinolate metabolism.</text>
</comment>
<comment type="subunit">
    <text evidence="1">Monomer.</text>
</comment>
<comment type="similarity">
    <text evidence="3">Belongs to the metallo-dependent hydrolases superfamily. ACMSD family.</text>
</comment>
<accession>Q54LN9</accession>